<protein>
    <recommendedName>
        <fullName evidence="2">Large ribosomal subunit protein eL30</fullName>
    </recommendedName>
    <alternativeName>
        <fullName>60S ribosomal protein L30</fullName>
    </alternativeName>
</protein>
<gene>
    <name evidence="2" type="primary">RPL30</name>
    <name type="ordered locus">orf19.3788.1</name>
    <name type="ORF">CAALFM_C404900WA</name>
</gene>
<feature type="chain" id="PRO_0000456509" description="Large ribosomal subunit protein eL30">
    <location>
        <begin position="1"/>
        <end position="106"/>
    </location>
</feature>
<organism>
    <name type="scientific">Candida albicans (strain SC5314 / ATCC MYA-2876)</name>
    <name type="common">Yeast</name>
    <dbReference type="NCBI Taxonomy" id="237561"/>
    <lineage>
        <taxon>Eukaryota</taxon>
        <taxon>Fungi</taxon>
        <taxon>Dikarya</taxon>
        <taxon>Ascomycota</taxon>
        <taxon>Saccharomycotina</taxon>
        <taxon>Pichiomycetes</taxon>
        <taxon>Debaryomycetaceae</taxon>
        <taxon>Candida/Lodderomyces clade</taxon>
        <taxon>Candida</taxon>
    </lineage>
</organism>
<name>RL30_CANAL</name>
<accession>A0A1D8PM75</accession>
<keyword id="KW-0002">3D-structure</keyword>
<keyword id="KW-0963">Cytoplasm</keyword>
<keyword id="KW-1185">Reference proteome</keyword>
<keyword id="KW-0687">Ribonucleoprotein</keyword>
<keyword id="KW-0689">Ribosomal protein</keyword>
<evidence type="ECO:0000269" key="1">
    <source>
    </source>
</evidence>
<evidence type="ECO:0000303" key="2">
    <source>
    </source>
</evidence>
<evidence type="ECO:0000305" key="3"/>
<evidence type="ECO:0000305" key="4">
    <source>
    </source>
</evidence>
<evidence type="ECO:0007744" key="5">
    <source>
        <dbReference type="PDB" id="7PZY"/>
    </source>
</evidence>
<evidence type="ECO:0007744" key="6">
    <source>
        <dbReference type="PDB" id="7Q0F"/>
    </source>
</evidence>
<evidence type="ECO:0007744" key="7">
    <source>
        <dbReference type="PDB" id="7Q0P"/>
    </source>
</evidence>
<proteinExistence type="evidence at protein level"/>
<reference key="1">
    <citation type="journal article" date="2004" name="Proc. Natl. Acad. Sci. U.S.A.">
        <title>The diploid genome sequence of Candida albicans.</title>
        <authorList>
            <person name="Jones T."/>
            <person name="Federspiel N.A."/>
            <person name="Chibana H."/>
            <person name="Dungan J."/>
            <person name="Kalman S."/>
            <person name="Magee B.B."/>
            <person name="Newport G."/>
            <person name="Thorstenson Y.R."/>
            <person name="Agabian N."/>
            <person name="Magee P.T."/>
            <person name="Davis R.W."/>
            <person name="Scherer S."/>
        </authorList>
    </citation>
    <scope>NUCLEOTIDE SEQUENCE [LARGE SCALE GENOMIC DNA]</scope>
    <source>
        <strain>SC5314 / ATCC MYA-2876</strain>
    </source>
</reference>
<reference key="2">
    <citation type="journal article" date="2007" name="Genome Biol.">
        <title>Assembly of the Candida albicans genome into sixteen supercontigs aligned on the eight chromosomes.</title>
        <authorList>
            <person name="van het Hoog M."/>
            <person name="Rast T.J."/>
            <person name="Martchenko M."/>
            <person name="Grindle S."/>
            <person name="Dignard D."/>
            <person name="Hogues H."/>
            <person name="Cuomo C."/>
            <person name="Berriman M."/>
            <person name="Scherer S."/>
            <person name="Magee B.B."/>
            <person name="Whiteway M."/>
            <person name="Chibana H."/>
            <person name="Nantel A."/>
            <person name="Magee P.T."/>
        </authorList>
    </citation>
    <scope>GENOME REANNOTATION</scope>
    <source>
        <strain>SC5314 / ATCC MYA-2876</strain>
    </source>
</reference>
<reference key="3">
    <citation type="journal article" date="2013" name="Genome Biol.">
        <title>Assembly of a phased diploid Candida albicans genome facilitates allele-specific measurements and provides a simple model for repeat and indel structure.</title>
        <authorList>
            <person name="Muzzey D."/>
            <person name="Schwartz K."/>
            <person name="Weissman J.S."/>
            <person name="Sherlock G."/>
        </authorList>
    </citation>
    <scope>NUCLEOTIDE SEQUENCE [LARGE SCALE GENOMIC DNA]</scope>
    <scope>GENOME REANNOTATION</scope>
    <source>
        <strain>SC5314 / ATCC MYA-2876</strain>
    </source>
</reference>
<reference evidence="5 6 7" key="4">
    <citation type="journal article" date="2022" name="Sci. Adv.">
        <title>E-site drug specificity of the human pathogen Candida albicans ribosome.</title>
        <authorList>
            <person name="Zgadzay Y."/>
            <person name="Kolosova O."/>
            <person name="Stetsenko A."/>
            <person name="Wu C."/>
            <person name="Bruchlen D."/>
            <person name="Usachev K."/>
            <person name="Validov S."/>
            <person name="Jenner L."/>
            <person name="Rogachev A."/>
            <person name="Yusupova G."/>
            <person name="Sachs M.S."/>
            <person name="Guskov A."/>
            <person name="Yusupov M."/>
        </authorList>
    </citation>
    <scope>STRUCTURE BY ELECTRON MICROSCOPY (2.32 ANGSTROMS) OF THE 80S RIBOSOME</scope>
    <scope>SUBUNIT</scope>
</reference>
<sequence>MAPKSNKNQENINSKLALTIKSGKYTLGYKSVVKSLRTGKAKLVIIAANTPVLRKSELEYYAMLSKTPVYYFQGGNNELGTVCGKLFRVGTLSILDAGDSDILSSI</sequence>
<comment type="function">
    <text evidence="4">Component of the ribosome, a large ribonucleoprotein complex responsible for the synthesis of proteins in the cell. The small ribosomal subunit (SSU) binds messenger RNAs (mRNAs) and translates the encoded message by selecting cognate aminoacyl-transfer RNA (tRNA) molecules. The large subunit (LSU) contains the ribosomal catalytic site termed the peptidyl transferase center (PTC), which catalyzes the formation of peptide bonds, thereby polymerizing the amino acids delivered by tRNAs into a polypeptide chain. The nascent polypeptides leave the ribosome through a tunnel in the LSU and interact with protein factors that function in enzymatic processing, targeting, and the membrane insertion of nascent chains at the exit of the ribosomal tunnel.</text>
</comment>
<comment type="subunit">
    <text evidence="1">Component of the large ribosomal subunit (PubMed:35613268). Mature ribosomes consist of a small (40S) and a large (60S) subunit (PubMed:35613268). The 40S subunit contains about 32 different proteins and 1 molecule of RNA (18S) (PubMed:35613268). The 60S subunit contains 45 different proteins and 3 molecules of RNA (25S, 5.8S and 5S) (PubMed:35613268).</text>
</comment>
<comment type="subcellular location">
    <subcellularLocation>
        <location evidence="4">Cytoplasm</location>
    </subcellularLocation>
</comment>
<comment type="similarity">
    <text evidence="3">Belongs to the eukaryotic ribosomal protein eL30 family.</text>
</comment>
<dbReference type="EMBL" id="CP017626">
    <property type="protein sequence ID" value="AOW29233.1"/>
    <property type="molecule type" value="Genomic_DNA"/>
</dbReference>
<dbReference type="RefSeq" id="XP_019330929.1">
    <property type="nucleotide sequence ID" value="XM_019475384.1"/>
</dbReference>
<dbReference type="PDB" id="7PZY">
    <property type="method" value="EM"/>
    <property type="resolution" value="2.32 A"/>
    <property type="chains" value="AD=1-106"/>
</dbReference>
<dbReference type="PDB" id="7Q08">
    <property type="method" value="EM"/>
    <property type="resolution" value="2.56 A"/>
    <property type="chains" value="AD=1-106"/>
</dbReference>
<dbReference type="PDB" id="7Q0F">
    <property type="method" value="EM"/>
    <property type="resolution" value="2.64 A"/>
    <property type="chains" value="AD=1-106"/>
</dbReference>
<dbReference type="PDB" id="7Q0P">
    <property type="method" value="EM"/>
    <property type="resolution" value="2.77 A"/>
    <property type="chains" value="AD=1-106"/>
</dbReference>
<dbReference type="PDB" id="7Q0R">
    <property type="method" value="EM"/>
    <property type="resolution" value="2.67 A"/>
    <property type="chains" value="AD=1-106"/>
</dbReference>
<dbReference type="PDB" id="8C3A">
    <property type="method" value="X-ray"/>
    <property type="resolution" value="3.00 A"/>
    <property type="chains" value="AD/BX=1-106"/>
</dbReference>
<dbReference type="PDB" id="8CQ7">
    <property type="method" value="X-ray"/>
    <property type="resolution" value="3.20 A"/>
    <property type="chains" value="AD/BX=1-106"/>
</dbReference>
<dbReference type="PDB" id="8CQW">
    <property type="method" value="X-ray"/>
    <property type="resolution" value="3.05 A"/>
    <property type="chains" value="AD/BX=1-106"/>
</dbReference>
<dbReference type="PDB" id="8CRE">
    <property type="method" value="X-ray"/>
    <property type="resolution" value="3.00 A"/>
    <property type="chains" value="AD/BX=1-106"/>
</dbReference>
<dbReference type="PDB" id="8OEQ">
    <property type="method" value="X-ray"/>
    <property type="resolution" value="3.30 A"/>
    <property type="chains" value="AD/BX=1-106"/>
</dbReference>
<dbReference type="PDB" id="8OGJ">
    <property type="method" value="EM"/>
    <property type="resolution" value="3.10 A"/>
    <property type="chains" value="AD=1-106"/>
</dbReference>
<dbReference type="PDB" id="8OH6">
    <property type="method" value="X-ray"/>
    <property type="resolution" value="3.35 A"/>
    <property type="chains" value="AD/BX=1-106"/>
</dbReference>
<dbReference type="PDB" id="8OI5">
    <property type="method" value="X-ray"/>
    <property type="resolution" value="2.90 A"/>
    <property type="chains" value="AD/BX=1-106"/>
</dbReference>
<dbReference type="PDB" id="8OJ3">
    <property type="method" value="X-ray"/>
    <property type="resolution" value="3.50 A"/>
    <property type="chains" value="AD/BX=1-106"/>
</dbReference>
<dbReference type="PDB" id="8Q5I">
    <property type="method" value="EM"/>
    <property type="resolution" value="2.45 A"/>
    <property type="chains" value="AD=1-106"/>
</dbReference>
<dbReference type="PDBsum" id="7PZY"/>
<dbReference type="PDBsum" id="7Q08"/>
<dbReference type="PDBsum" id="7Q0F"/>
<dbReference type="PDBsum" id="7Q0P"/>
<dbReference type="PDBsum" id="7Q0R"/>
<dbReference type="PDBsum" id="8C3A"/>
<dbReference type="PDBsum" id="8CQ7"/>
<dbReference type="PDBsum" id="8CQW"/>
<dbReference type="PDBsum" id="8CRE"/>
<dbReference type="PDBsum" id="8OEQ"/>
<dbReference type="PDBsum" id="8OGJ"/>
<dbReference type="PDBsum" id="8OH6"/>
<dbReference type="PDBsum" id="8OI5"/>
<dbReference type="PDBsum" id="8OJ3"/>
<dbReference type="PDBsum" id="8Q5I"/>
<dbReference type="EMDB" id="EMD-13737"/>
<dbReference type="EMDB" id="EMD-13741"/>
<dbReference type="EMDB" id="EMD-13744"/>
<dbReference type="EMDB" id="EMD-13749"/>
<dbReference type="EMDB" id="EMD-13750"/>
<dbReference type="EMDB" id="EMD-16874"/>
<dbReference type="SMR" id="A0A1D8PM75"/>
<dbReference type="FunCoup" id="A0A1D8PM75">
    <property type="interactions" value="1310"/>
</dbReference>
<dbReference type="STRING" id="237561.A0A1D8PM75"/>
<dbReference type="EnsemblFungi" id="C4_04900W_A-T">
    <property type="protein sequence ID" value="C4_04900W_A-T-p1"/>
    <property type="gene ID" value="C4_04900W_A"/>
</dbReference>
<dbReference type="GeneID" id="30515273"/>
<dbReference type="KEGG" id="cal:CAALFM_C404900WA"/>
<dbReference type="CGD" id="CAL0000189848">
    <property type="gene designation" value="RPL30"/>
</dbReference>
<dbReference type="VEuPathDB" id="FungiDB:C4_04900W_A"/>
<dbReference type="eggNOG" id="KOG2988">
    <property type="taxonomic scope" value="Eukaryota"/>
</dbReference>
<dbReference type="InParanoid" id="A0A1D8PM75"/>
<dbReference type="OMA" id="YFQGGNN"/>
<dbReference type="OrthoDB" id="1928736at2759"/>
<dbReference type="Proteomes" id="UP000000559">
    <property type="component" value="Chromosome 4"/>
</dbReference>
<dbReference type="GO" id="GO:0022625">
    <property type="term" value="C:cytosolic large ribosomal subunit"/>
    <property type="evidence" value="ECO:0000318"/>
    <property type="project" value="GO_Central"/>
</dbReference>
<dbReference type="GO" id="GO:0030627">
    <property type="term" value="F:pre-mRNA 5'-splice site binding"/>
    <property type="evidence" value="ECO:0007669"/>
    <property type="project" value="EnsemblFungi"/>
</dbReference>
<dbReference type="GO" id="GO:0003723">
    <property type="term" value="F:RNA binding"/>
    <property type="evidence" value="ECO:0000318"/>
    <property type="project" value="GO_Central"/>
</dbReference>
<dbReference type="GO" id="GO:0003735">
    <property type="term" value="F:structural constituent of ribosome"/>
    <property type="evidence" value="ECO:0000318"/>
    <property type="project" value="GO_Central"/>
</dbReference>
<dbReference type="GO" id="GO:0048025">
    <property type="term" value="P:negative regulation of mRNA splicing, via spliceosome"/>
    <property type="evidence" value="ECO:0007669"/>
    <property type="project" value="EnsemblFungi"/>
</dbReference>
<dbReference type="GO" id="GO:0006364">
    <property type="term" value="P:rRNA processing"/>
    <property type="evidence" value="ECO:0007669"/>
    <property type="project" value="EnsemblFungi"/>
</dbReference>
<dbReference type="FunFam" id="3.30.1330.30:FF:000001">
    <property type="entry name" value="60S ribosomal protein L30"/>
    <property type="match status" value="1"/>
</dbReference>
<dbReference type="Gene3D" id="3.30.1330.30">
    <property type="match status" value="1"/>
</dbReference>
<dbReference type="InterPro" id="IPR039109">
    <property type="entry name" value="Ribosomal_eL30-like"/>
</dbReference>
<dbReference type="InterPro" id="IPR029064">
    <property type="entry name" value="Ribosomal_eL30-like_sf"/>
</dbReference>
<dbReference type="InterPro" id="IPR022991">
    <property type="entry name" value="Ribosomal_eL30_CS"/>
</dbReference>
<dbReference type="InterPro" id="IPR004038">
    <property type="entry name" value="Ribosomal_eL8/eL30/eS12/Gad45"/>
</dbReference>
<dbReference type="NCBIfam" id="NF002172">
    <property type="entry name" value="PRK01018.1"/>
    <property type="match status" value="1"/>
</dbReference>
<dbReference type="PANTHER" id="PTHR11449">
    <property type="entry name" value="RIBOSOMAL PROTEIN L30"/>
    <property type="match status" value="1"/>
</dbReference>
<dbReference type="Pfam" id="PF01248">
    <property type="entry name" value="Ribosomal_L7Ae"/>
    <property type="match status" value="1"/>
</dbReference>
<dbReference type="SUPFAM" id="SSF55315">
    <property type="entry name" value="L30e-like"/>
    <property type="match status" value="1"/>
</dbReference>
<dbReference type="PROSITE" id="PS00709">
    <property type="entry name" value="RIBOSOMAL_L30E_1"/>
    <property type="match status" value="1"/>
</dbReference>
<dbReference type="PROSITE" id="PS00993">
    <property type="entry name" value="RIBOSOMAL_L30E_2"/>
    <property type="match status" value="1"/>
</dbReference>